<organism>
    <name type="scientific">Schizosaccharomyces pombe (strain 972 / ATCC 24843)</name>
    <name type="common">Fission yeast</name>
    <dbReference type="NCBI Taxonomy" id="284812"/>
    <lineage>
        <taxon>Eukaryota</taxon>
        <taxon>Fungi</taxon>
        <taxon>Dikarya</taxon>
        <taxon>Ascomycota</taxon>
        <taxon>Taphrinomycotina</taxon>
        <taxon>Schizosaccharomycetes</taxon>
        <taxon>Schizosaccharomycetales</taxon>
        <taxon>Schizosaccharomycetaceae</taxon>
        <taxon>Schizosaccharomyces</taxon>
    </lineage>
</organism>
<name>YH56_SCHPO</name>
<keyword id="KW-0479">Metal-binding</keyword>
<keyword id="KW-0539">Nucleus</keyword>
<keyword id="KW-0597">Phosphoprotein</keyword>
<keyword id="KW-1185">Reference proteome</keyword>
<keyword id="KW-0677">Repeat</keyword>
<keyword id="KW-0862">Zinc</keyword>
<keyword id="KW-0863">Zinc-finger</keyword>
<feature type="chain" id="PRO_0000373990" description="UPF0743 protein C215.06c">
    <location>
        <begin position="1"/>
        <end position="180"/>
    </location>
</feature>
<feature type="zinc finger region" description="C2HC LYAR-type 1" evidence="1">
    <location>
        <begin position="1"/>
        <end position="26"/>
    </location>
</feature>
<feature type="zinc finger region" description="C2HC LYAR-type 2" evidence="1">
    <location>
        <begin position="27"/>
        <end position="51"/>
    </location>
</feature>
<feature type="region of interest" description="Disordered" evidence="2">
    <location>
        <begin position="61"/>
        <end position="125"/>
    </location>
</feature>
<feature type="compositionally biased region" description="Polar residues" evidence="2">
    <location>
        <begin position="77"/>
        <end position="95"/>
    </location>
</feature>
<feature type="compositionally biased region" description="Basic and acidic residues" evidence="2">
    <location>
        <begin position="100"/>
        <end position="111"/>
    </location>
</feature>
<feature type="binding site" evidence="1">
    <location>
        <position position="6"/>
    </location>
    <ligand>
        <name>Zn(2+)</name>
        <dbReference type="ChEBI" id="CHEBI:29105"/>
        <label>1</label>
    </ligand>
</feature>
<feature type="binding site" evidence="1">
    <location>
        <position position="9"/>
    </location>
    <ligand>
        <name>Zn(2+)</name>
        <dbReference type="ChEBI" id="CHEBI:29105"/>
        <label>1</label>
    </ligand>
</feature>
<feature type="binding site" evidence="1">
    <location>
        <position position="21"/>
    </location>
    <ligand>
        <name>Zn(2+)</name>
        <dbReference type="ChEBI" id="CHEBI:29105"/>
        <label>1</label>
    </ligand>
</feature>
<feature type="binding site" evidence="1">
    <location>
        <position position="25"/>
    </location>
    <ligand>
        <name>Zn(2+)</name>
        <dbReference type="ChEBI" id="CHEBI:29105"/>
        <label>1</label>
    </ligand>
</feature>
<feature type="binding site" evidence="1">
    <location>
        <position position="32"/>
    </location>
    <ligand>
        <name>Zn(2+)</name>
        <dbReference type="ChEBI" id="CHEBI:29105"/>
        <label>2</label>
    </ligand>
</feature>
<feature type="binding site" evidence="1">
    <location>
        <position position="35"/>
    </location>
    <ligand>
        <name>Zn(2+)</name>
        <dbReference type="ChEBI" id="CHEBI:29105"/>
        <label>2</label>
    </ligand>
</feature>
<feature type="binding site" evidence="1">
    <location>
        <position position="47"/>
    </location>
    <ligand>
        <name>Zn(2+)</name>
        <dbReference type="ChEBI" id="CHEBI:29105"/>
        <label>2</label>
    </ligand>
</feature>
<feature type="binding site" evidence="1">
    <location>
        <position position="50"/>
    </location>
    <ligand>
        <name>Zn(2+)</name>
        <dbReference type="ChEBI" id="CHEBI:29105"/>
        <label>2</label>
    </ligand>
</feature>
<feature type="modified residue" description="Phosphoserine" evidence="4">
    <location>
        <position position="85"/>
    </location>
</feature>
<sequence>MVSFCCEVCQDIIKKPKLDQHRSRCHGAYFTCIDCNTTFERTDYRNHTSCMTEAQRYQKGLYRPTKKELKKAKMNGNAVNSKELSPNTDNQNTPAGPTKHSLDENEKDKENKKSKKETVSSPAEQLLALTQNQEISLYKLLKKYNKQASKEDSLDSKEVLKHLAITADAKGNYLVKPITK</sequence>
<dbReference type="EMBL" id="CU329671">
    <property type="protein sequence ID" value="CAA22120.2"/>
    <property type="molecule type" value="Genomic_DNA"/>
</dbReference>
<dbReference type="PIR" id="T39896">
    <property type="entry name" value="T39896"/>
</dbReference>
<dbReference type="RefSeq" id="NP_596683.2">
    <property type="nucleotide sequence ID" value="NM_001022606.2"/>
</dbReference>
<dbReference type="SMR" id="O94311"/>
<dbReference type="BioGRID" id="277266">
    <property type="interactions" value="9"/>
</dbReference>
<dbReference type="FunCoup" id="O94311">
    <property type="interactions" value="78"/>
</dbReference>
<dbReference type="STRING" id="284812.O94311"/>
<dbReference type="iPTMnet" id="O94311"/>
<dbReference type="PaxDb" id="4896-SPBC215.06c.1"/>
<dbReference type="EnsemblFungi" id="SPBC215.06c.1">
    <property type="protein sequence ID" value="SPBC215.06c.1:pep"/>
    <property type="gene ID" value="SPBC215.06c"/>
</dbReference>
<dbReference type="KEGG" id="spo:2540743"/>
<dbReference type="PomBase" id="SPBC215.06c"/>
<dbReference type="VEuPathDB" id="FungiDB:SPBC215.06c"/>
<dbReference type="eggNOG" id="KOG2186">
    <property type="taxonomic scope" value="Eukaryota"/>
</dbReference>
<dbReference type="HOGENOM" id="CLU_098018_0_0_1"/>
<dbReference type="InParanoid" id="O94311"/>
<dbReference type="OMA" id="MTEAQRY"/>
<dbReference type="PRO" id="PR:O94311"/>
<dbReference type="Proteomes" id="UP000002485">
    <property type="component" value="Chromosome II"/>
</dbReference>
<dbReference type="GO" id="GO:0005730">
    <property type="term" value="C:nucleolus"/>
    <property type="evidence" value="ECO:0000318"/>
    <property type="project" value="GO_Central"/>
</dbReference>
<dbReference type="GO" id="GO:0005634">
    <property type="term" value="C:nucleus"/>
    <property type="evidence" value="ECO:0007005"/>
    <property type="project" value="PomBase"/>
</dbReference>
<dbReference type="GO" id="GO:0003677">
    <property type="term" value="F:DNA binding"/>
    <property type="evidence" value="ECO:0000318"/>
    <property type="project" value="GO_Central"/>
</dbReference>
<dbReference type="GO" id="GO:0003723">
    <property type="term" value="F:RNA binding"/>
    <property type="evidence" value="ECO:0000250"/>
    <property type="project" value="PomBase"/>
</dbReference>
<dbReference type="GO" id="GO:0008270">
    <property type="term" value="F:zinc ion binding"/>
    <property type="evidence" value="ECO:0007669"/>
    <property type="project" value="UniProtKB-KW"/>
</dbReference>
<dbReference type="GO" id="GO:0000122">
    <property type="term" value="P:negative regulation of transcription by RNA polymerase II"/>
    <property type="evidence" value="ECO:0000318"/>
    <property type="project" value="GO_Central"/>
</dbReference>
<dbReference type="GO" id="GO:0006364">
    <property type="term" value="P:rRNA processing"/>
    <property type="evidence" value="ECO:0000318"/>
    <property type="project" value="GO_Central"/>
</dbReference>
<dbReference type="FunFam" id="3.30.1490.490:FF:000001">
    <property type="entry name" value="cell growth-regulating nucleolar protein-like"/>
    <property type="match status" value="1"/>
</dbReference>
<dbReference type="Gene3D" id="3.30.1490.490">
    <property type="match status" value="1"/>
</dbReference>
<dbReference type="InterPro" id="IPR039999">
    <property type="entry name" value="LYAR"/>
</dbReference>
<dbReference type="InterPro" id="IPR014898">
    <property type="entry name" value="Znf_C2H2_LYAR"/>
</dbReference>
<dbReference type="InterPro" id="IPR036236">
    <property type="entry name" value="Znf_C2H2_sf"/>
</dbReference>
<dbReference type="PANTHER" id="PTHR13100:SF10">
    <property type="entry name" value="CELL GROWTH-REGULATING NUCLEOLAR PROTEIN"/>
    <property type="match status" value="1"/>
</dbReference>
<dbReference type="PANTHER" id="PTHR13100">
    <property type="entry name" value="CELL GROWTH-REGULATING NUCLEOLAR PROTEIN LYAR"/>
    <property type="match status" value="1"/>
</dbReference>
<dbReference type="Pfam" id="PF08790">
    <property type="entry name" value="zf-LYAR"/>
    <property type="match status" value="1"/>
</dbReference>
<dbReference type="SUPFAM" id="SSF57667">
    <property type="entry name" value="beta-beta-alpha zinc fingers"/>
    <property type="match status" value="2"/>
</dbReference>
<dbReference type="PROSITE" id="PS51804">
    <property type="entry name" value="ZF_C2HC_LYAR"/>
    <property type="match status" value="2"/>
</dbReference>
<comment type="subcellular location">
    <subcellularLocation>
        <location evidence="3">Nucleus</location>
    </subcellularLocation>
</comment>
<comment type="similarity">
    <text evidence="5">Belongs to the UPF0743 family.</text>
</comment>
<proteinExistence type="evidence at protein level"/>
<accession>O94311</accession>
<reference key="1">
    <citation type="journal article" date="2002" name="Nature">
        <title>The genome sequence of Schizosaccharomyces pombe.</title>
        <authorList>
            <person name="Wood V."/>
            <person name="Gwilliam R."/>
            <person name="Rajandream M.A."/>
            <person name="Lyne M.H."/>
            <person name="Lyne R."/>
            <person name="Stewart A."/>
            <person name="Sgouros J.G."/>
            <person name="Peat N."/>
            <person name="Hayles J."/>
            <person name="Baker S.G."/>
            <person name="Basham D."/>
            <person name="Bowman S."/>
            <person name="Brooks K."/>
            <person name="Brown D."/>
            <person name="Brown S."/>
            <person name="Chillingworth T."/>
            <person name="Churcher C.M."/>
            <person name="Collins M."/>
            <person name="Connor R."/>
            <person name="Cronin A."/>
            <person name="Davis P."/>
            <person name="Feltwell T."/>
            <person name="Fraser A."/>
            <person name="Gentles S."/>
            <person name="Goble A."/>
            <person name="Hamlin N."/>
            <person name="Harris D.E."/>
            <person name="Hidalgo J."/>
            <person name="Hodgson G."/>
            <person name="Holroyd S."/>
            <person name="Hornsby T."/>
            <person name="Howarth S."/>
            <person name="Huckle E.J."/>
            <person name="Hunt S."/>
            <person name="Jagels K."/>
            <person name="James K.D."/>
            <person name="Jones L."/>
            <person name="Jones M."/>
            <person name="Leather S."/>
            <person name="McDonald S."/>
            <person name="McLean J."/>
            <person name="Mooney P."/>
            <person name="Moule S."/>
            <person name="Mungall K.L."/>
            <person name="Murphy L.D."/>
            <person name="Niblett D."/>
            <person name="Odell C."/>
            <person name="Oliver K."/>
            <person name="O'Neil S."/>
            <person name="Pearson D."/>
            <person name="Quail M.A."/>
            <person name="Rabbinowitsch E."/>
            <person name="Rutherford K.M."/>
            <person name="Rutter S."/>
            <person name="Saunders D."/>
            <person name="Seeger K."/>
            <person name="Sharp S."/>
            <person name="Skelton J."/>
            <person name="Simmonds M.N."/>
            <person name="Squares R."/>
            <person name="Squares S."/>
            <person name="Stevens K."/>
            <person name="Taylor K."/>
            <person name="Taylor R.G."/>
            <person name="Tivey A."/>
            <person name="Walsh S.V."/>
            <person name="Warren T."/>
            <person name="Whitehead S."/>
            <person name="Woodward J.R."/>
            <person name="Volckaert G."/>
            <person name="Aert R."/>
            <person name="Robben J."/>
            <person name="Grymonprez B."/>
            <person name="Weltjens I."/>
            <person name="Vanstreels E."/>
            <person name="Rieger M."/>
            <person name="Schaefer M."/>
            <person name="Mueller-Auer S."/>
            <person name="Gabel C."/>
            <person name="Fuchs M."/>
            <person name="Duesterhoeft A."/>
            <person name="Fritzc C."/>
            <person name="Holzer E."/>
            <person name="Moestl D."/>
            <person name="Hilbert H."/>
            <person name="Borzym K."/>
            <person name="Langer I."/>
            <person name="Beck A."/>
            <person name="Lehrach H."/>
            <person name="Reinhardt R."/>
            <person name="Pohl T.M."/>
            <person name="Eger P."/>
            <person name="Zimmermann W."/>
            <person name="Wedler H."/>
            <person name="Wambutt R."/>
            <person name="Purnelle B."/>
            <person name="Goffeau A."/>
            <person name="Cadieu E."/>
            <person name="Dreano S."/>
            <person name="Gloux S."/>
            <person name="Lelaure V."/>
            <person name="Mottier S."/>
            <person name="Galibert F."/>
            <person name="Aves S.J."/>
            <person name="Xiang Z."/>
            <person name="Hunt C."/>
            <person name="Moore K."/>
            <person name="Hurst S.M."/>
            <person name="Lucas M."/>
            <person name="Rochet M."/>
            <person name="Gaillardin C."/>
            <person name="Tallada V.A."/>
            <person name="Garzon A."/>
            <person name="Thode G."/>
            <person name="Daga R.R."/>
            <person name="Cruzado L."/>
            <person name="Jimenez J."/>
            <person name="Sanchez M."/>
            <person name="del Rey F."/>
            <person name="Benito J."/>
            <person name="Dominguez A."/>
            <person name="Revuelta J.L."/>
            <person name="Moreno S."/>
            <person name="Armstrong J."/>
            <person name="Forsburg S.L."/>
            <person name="Cerutti L."/>
            <person name="Lowe T."/>
            <person name="McCombie W.R."/>
            <person name="Paulsen I."/>
            <person name="Potashkin J."/>
            <person name="Shpakovski G.V."/>
            <person name="Ussery D."/>
            <person name="Barrell B.G."/>
            <person name="Nurse P."/>
        </authorList>
    </citation>
    <scope>NUCLEOTIDE SEQUENCE [LARGE SCALE GENOMIC DNA]</scope>
    <source>
        <strain>972 / ATCC 24843</strain>
    </source>
</reference>
<reference key="2">
    <citation type="journal article" date="2011" name="Science">
        <title>Comparative functional genomics of the fission yeasts.</title>
        <authorList>
            <person name="Rhind N."/>
            <person name="Chen Z."/>
            <person name="Yassour M."/>
            <person name="Thompson D.A."/>
            <person name="Haas B.J."/>
            <person name="Habib N."/>
            <person name="Wapinski I."/>
            <person name="Roy S."/>
            <person name="Lin M.F."/>
            <person name="Heiman D.I."/>
            <person name="Young S.K."/>
            <person name="Furuya K."/>
            <person name="Guo Y."/>
            <person name="Pidoux A."/>
            <person name="Chen H.M."/>
            <person name="Robbertse B."/>
            <person name="Goldberg J.M."/>
            <person name="Aoki K."/>
            <person name="Bayne E.H."/>
            <person name="Berlin A.M."/>
            <person name="Desjardins C.A."/>
            <person name="Dobbs E."/>
            <person name="Dukaj L."/>
            <person name="Fan L."/>
            <person name="FitzGerald M.G."/>
            <person name="French C."/>
            <person name="Gujja S."/>
            <person name="Hansen K."/>
            <person name="Keifenheim D."/>
            <person name="Levin J.Z."/>
            <person name="Mosher R.A."/>
            <person name="Mueller C.A."/>
            <person name="Pfiffner J."/>
            <person name="Priest M."/>
            <person name="Russ C."/>
            <person name="Smialowska A."/>
            <person name="Swoboda P."/>
            <person name="Sykes S.M."/>
            <person name="Vaughn M."/>
            <person name="Vengrova S."/>
            <person name="Yoder R."/>
            <person name="Zeng Q."/>
            <person name="Allshire R."/>
            <person name="Baulcombe D."/>
            <person name="Birren B.W."/>
            <person name="Brown W."/>
            <person name="Ekwall K."/>
            <person name="Kellis M."/>
            <person name="Leatherwood J."/>
            <person name="Levin H."/>
            <person name="Margalit H."/>
            <person name="Martienssen R."/>
            <person name="Nieduszynski C.A."/>
            <person name="Spatafora J.W."/>
            <person name="Friedman N."/>
            <person name="Dalgaard J.Z."/>
            <person name="Baumann P."/>
            <person name="Niki H."/>
            <person name="Regev A."/>
            <person name="Nusbaum C."/>
        </authorList>
    </citation>
    <scope>REVISION OF GENE MODEL</scope>
</reference>
<reference key="3">
    <citation type="journal article" date="2006" name="Nat. Biotechnol.">
        <title>ORFeome cloning and global analysis of protein localization in the fission yeast Schizosaccharomyces pombe.</title>
        <authorList>
            <person name="Matsuyama A."/>
            <person name="Arai R."/>
            <person name="Yashiroda Y."/>
            <person name="Shirai A."/>
            <person name="Kamata A."/>
            <person name="Sekido S."/>
            <person name="Kobayashi Y."/>
            <person name="Hashimoto A."/>
            <person name="Hamamoto M."/>
            <person name="Hiraoka Y."/>
            <person name="Horinouchi S."/>
            <person name="Yoshida M."/>
        </authorList>
    </citation>
    <scope>SUBCELLULAR LOCATION [LARGE SCALE ANALYSIS]</scope>
</reference>
<reference key="4">
    <citation type="journal article" date="2008" name="J. Proteome Res.">
        <title>Phosphoproteome analysis of fission yeast.</title>
        <authorList>
            <person name="Wilson-Grady J.T."/>
            <person name="Villen J."/>
            <person name="Gygi S.P."/>
        </authorList>
    </citation>
    <scope>PHOSPHORYLATION [LARGE SCALE ANALYSIS] AT SER-85</scope>
    <scope>IDENTIFICATION BY MASS SPECTROMETRY</scope>
</reference>
<protein>
    <recommendedName>
        <fullName>UPF0743 protein C215.06c</fullName>
    </recommendedName>
</protein>
<gene>
    <name type="ORF">SPBC215.06c</name>
</gene>
<evidence type="ECO:0000255" key="1">
    <source>
        <dbReference type="PROSITE-ProRule" id="PRU01145"/>
    </source>
</evidence>
<evidence type="ECO:0000256" key="2">
    <source>
        <dbReference type="SAM" id="MobiDB-lite"/>
    </source>
</evidence>
<evidence type="ECO:0000269" key="3">
    <source>
    </source>
</evidence>
<evidence type="ECO:0000269" key="4">
    <source>
    </source>
</evidence>
<evidence type="ECO:0000305" key="5"/>